<evidence type="ECO:0000255" key="1">
    <source>
        <dbReference type="HAMAP-Rule" id="MF_00046"/>
    </source>
</evidence>
<organism>
    <name type="scientific">Burkholderia mallei (strain ATCC 23344)</name>
    <dbReference type="NCBI Taxonomy" id="243160"/>
    <lineage>
        <taxon>Bacteria</taxon>
        <taxon>Pseudomonadati</taxon>
        <taxon>Pseudomonadota</taxon>
        <taxon>Betaproteobacteria</taxon>
        <taxon>Burkholderiales</taxon>
        <taxon>Burkholderiaceae</taxon>
        <taxon>Burkholderia</taxon>
        <taxon>pseudomallei group</taxon>
    </lineage>
</organism>
<proteinExistence type="inferred from homology"/>
<reference key="1">
    <citation type="journal article" date="2004" name="Proc. Natl. Acad. Sci. U.S.A.">
        <title>Structural flexibility in the Burkholderia mallei genome.</title>
        <authorList>
            <person name="Nierman W.C."/>
            <person name="DeShazer D."/>
            <person name="Kim H.S."/>
            <person name="Tettelin H."/>
            <person name="Nelson K.E."/>
            <person name="Feldblyum T.V."/>
            <person name="Ulrich R.L."/>
            <person name="Ronning C.M."/>
            <person name="Brinkac L.M."/>
            <person name="Daugherty S.C."/>
            <person name="Davidsen T.D."/>
            <person name="DeBoy R.T."/>
            <person name="Dimitrov G."/>
            <person name="Dodson R.J."/>
            <person name="Durkin A.S."/>
            <person name="Gwinn M.L."/>
            <person name="Haft D.H."/>
            <person name="Khouri H.M."/>
            <person name="Kolonay J.F."/>
            <person name="Madupu R."/>
            <person name="Mohammoud Y."/>
            <person name="Nelson W.C."/>
            <person name="Radune D."/>
            <person name="Romero C.M."/>
            <person name="Sarria S."/>
            <person name="Selengut J."/>
            <person name="Shamblin C."/>
            <person name="Sullivan S.A."/>
            <person name="White O."/>
            <person name="Yu Y."/>
            <person name="Zafar N."/>
            <person name="Zhou L."/>
            <person name="Fraser C.M."/>
        </authorList>
    </citation>
    <scope>NUCLEOTIDE SEQUENCE [LARGE SCALE GENOMIC DNA]</scope>
    <source>
        <strain>ATCC 23344</strain>
    </source>
</reference>
<name>MURC_BURMA</name>
<comment type="function">
    <text evidence="1">Cell wall formation.</text>
</comment>
<comment type="catalytic activity">
    <reaction evidence="1">
        <text>UDP-N-acetyl-alpha-D-muramate + L-alanine + ATP = UDP-N-acetyl-alpha-D-muramoyl-L-alanine + ADP + phosphate + H(+)</text>
        <dbReference type="Rhea" id="RHEA:23372"/>
        <dbReference type="ChEBI" id="CHEBI:15378"/>
        <dbReference type="ChEBI" id="CHEBI:30616"/>
        <dbReference type="ChEBI" id="CHEBI:43474"/>
        <dbReference type="ChEBI" id="CHEBI:57972"/>
        <dbReference type="ChEBI" id="CHEBI:70757"/>
        <dbReference type="ChEBI" id="CHEBI:83898"/>
        <dbReference type="ChEBI" id="CHEBI:456216"/>
        <dbReference type="EC" id="6.3.2.8"/>
    </reaction>
</comment>
<comment type="pathway">
    <text evidence="1">Cell wall biogenesis; peptidoglycan biosynthesis.</text>
</comment>
<comment type="subcellular location">
    <subcellularLocation>
        <location evidence="1">Cytoplasm</location>
    </subcellularLocation>
</comment>
<comment type="similarity">
    <text evidence="1">Belongs to the MurCDEF family.</text>
</comment>
<sequence length="465" mass="49056">MKHIVKHIHFVGIGGAGMSGIAEVLVNLGYQVSGSDLARNAVTERLEALGARVSIGHDAANIEGANAVVVSTAVRSDNPEVLAARRLRVPIVPRAVMLAELMRLKQGIAIAGTHGKTTTTSLVASVLAAGGLDPTFVIGGRLTSAGANARLGMGDFIVAEADESDASFLNLYPVIEVITNIDADHMDTYGHDFARLKQAFIEFTQRLPFYGSAVVCIDDANVRQIVPLISKPVVRYGFAADAQVRAENVEARDGRMHFTVRREGREPLPVVLNLPGLHNVQNALAAIAIATDLDVADAAIQQALAEFNGVGRRFQRYGEIAAAGGGAYTLIDDYGHHPVEMAATIAAARGAFPGRRLVLAFQPHRYTRTRDCFDDFVNVLSTVDALVLTEVYAAGEAPISTANGDALSRALRAAGKVEPVFVATVDEVPDALAKLARDGDVVITMGAGSIGGVPGKLAQDTQQKG</sequence>
<protein>
    <recommendedName>
        <fullName evidence="1">UDP-N-acetylmuramate--L-alanine ligase</fullName>
        <ecNumber evidence="1">6.3.2.8</ecNumber>
    </recommendedName>
    <alternativeName>
        <fullName evidence="1">UDP-N-acetylmuramoyl-L-alanine synthetase</fullName>
    </alternativeName>
</protein>
<accession>Q62GS8</accession>
<gene>
    <name evidence="1" type="primary">murC</name>
    <name type="ordered locus">BMA2550</name>
</gene>
<feature type="chain" id="PRO_0000182071" description="UDP-N-acetylmuramate--L-alanine ligase">
    <location>
        <begin position="1"/>
        <end position="465"/>
    </location>
</feature>
<feature type="binding site" evidence="1">
    <location>
        <begin position="112"/>
        <end position="118"/>
    </location>
    <ligand>
        <name>ATP</name>
        <dbReference type="ChEBI" id="CHEBI:30616"/>
    </ligand>
</feature>
<keyword id="KW-0067">ATP-binding</keyword>
<keyword id="KW-0131">Cell cycle</keyword>
<keyword id="KW-0132">Cell division</keyword>
<keyword id="KW-0133">Cell shape</keyword>
<keyword id="KW-0961">Cell wall biogenesis/degradation</keyword>
<keyword id="KW-0963">Cytoplasm</keyword>
<keyword id="KW-0436">Ligase</keyword>
<keyword id="KW-0547">Nucleotide-binding</keyword>
<keyword id="KW-0573">Peptidoglycan synthesis</keyword>
<keyword id="KW-1185">Reference proteome</keyword>
<dbReference type="EC" id="6.3.2.8" evidence="1"/>
<dbReference type="EMBL" id="CP000010">
    <property type="protein sequence ID" value="AAU50053.1"/>
    <property type="molecule type" value="Genomic_DNA"/>
</dbReference>
<dbReference type="RefSeq" id="WP_004194319.1">
    <property type="nucleotide sequence ID" value="NC_006348.1"/>
</dbReference>
<dbReference type="RefSeq" id="YP_104093.1">
    <property type="nucleotide sequence ID" value="NC_006348.1"/>
</dbReference>
<dbReference type="SMR" id="Q62GS8"/>
<dbReference type="GeneID" id="92980242"/>
<dbReference type="KEGG" id="bma:BMA2550"/>
<dbReference type="PATRIC" id="fig|243160.12.peg.2627"/>
<dbReference type="eggNOG" id="COG0773">
    <property type="taxonomic scope" value="Bacteria"/>
</dbReference>
<dbReference type="HOGENOM" id="CLU_028104_2_2_4"/>
<dbReference type="UniPathway" id="UPA00219"/>
<dbReference type="Proteomes" id="UP000006693">
    <property type="component" value="Chromosome 1"/>
</dbReference>
<dbReference type="GO" id="GO:0005737">
    <property type="term" value="C:cytoplasm"/>
    <property type="evidence" value="ECO:0007669"/>
    <property type="project" value="UniProtKB-SubCell"/>
</dbReference>
<dbReference type="GO" id="GO:0005524">
    <property type="term" value="F:ATP binding"/>
    <property type="evidence" value="ECO:0007669"/>
    <property type="project" value="UniProtKB-UniRule"/>
</dbReference>
<dbReference type="GO" id="GO:0008763">
    <property type="term" value="F:UDP-N-acetylmuramate-L-alanine ligase activity"/>
    <property type="evidence" value="ECO:0007669"/>
    <property type="project" value="UniProtKB-UniRule"/>
</dbReference>
<dbReference type="GO" id="GO:0051301">
    <property type="term" value="P:cell division"/>
    <property type="evidence" value="ECO:0007669"/>
    <property type="project" value="UniProtKB-KW"/>
</dbReference>
<dbReference type="GO" id="GO:0071555">
    <property type="term" value="P:cell wall organization"/>
    <property type="evidence" value="ECO:0007669"/>
    <property type="project" value="UniProtKB-KW"/>
</dbReference>
<dbReference type="GO" id="GO:0009252">
    <property type="term" value="P:peptidoglycan biosynthetic process"/>
    <property type="evidence" value="ECO:0007669"/>
    <property type="project" value="UniProtKB-UniRule"/>
</dbReference>
<dbReference type="GO" id="GO:0008360">
    <property type="term" value="P:regulation of cell shape"/>
    <property type="evidence" value="ECO:0007669"/>
    <property type="project" value="UniProtKB-KW"/>
</dbReference>
<dbReference type="FunFam" id="3.40.1190.10:FF:000001">
    <property type="entry name" value="UDP-N-acetylmuramate--L-alanine ligase"/>
    <property type="match status" value="1"/>
</dbReference>
<dbReference type="Gene3D" id="3.90.190.20">
    <property type="entry name" value="Mur ligase, C-terminal domain"/>
    <property type="match status" value="1"/>
</dbReference>
<dbReference type="Gene3D" id="3.40.1190.10">
    <property type="entry name" value="Mur-like, catalytic domain"/>
    <property type="match status" value="1"/>
</dbReference>
<dbReference type="Gene3D" id="3.40.50.720">
    <property type="entry name" value="NAD(P)-binding Rossmann-like Domain"/>
    <property type="match status" value="1"/>
</dbReference>
<dbReference type="HAMAP" id="MF_00046">
    <property type="entry name" value="MurC"/>
    <property type="match status" value="1"/>
</dbReference>
<dbReference type="InterPro" id="IPR036565">
    <property type="entry name" value="Mur-like_cat_sf"/>
</dbReference>
<dbReference type="InterPro" id="IPR004101">
    <property type="entry name" value="Mur_ligase_C"/>
</dbReference>
<dbReference type="InterPro" id="IPR036615">
    <property type="entry name" value="Mur_ligase_C_dom_sf"/>
</dbReference>
<dbReference type="InterPro" id="IPR013221">
    <property type="entry name" value="Mur_ligase_cen"/>
</dbReference>
<dbReference type="InterPro" id="IPR000713">
    <property type="entry name" value="Mur_ligase_N"/>
</dbReference>
<dbReference type="InterPro" id="IPR050061">
    <property type="entry name" value="MurCDEF_pg_biosynth"/>
</dbReference>
<dbReference type="InterPro" id="IPR005758">
    <property type="entry name" value="UDP-N-AcMur_Ala_ligase_MurC"/>
</dbReference>
<dbReference type="NCBIfam" id="TIGR01082">
    <property type="entry name" value="murC"/>
    <property type="match status" value="1"/>
</dbReference>
<dbReference type="PANTHER" id="PTHR43445:SF3">
    <property type="entry name" value="UDP-N-ACETYLMURAMATE--L-ALANINE LIGASE"/>
    <property type="match status" value="1"/>
</dbReference>
<dbReference type="PANTHER" id="PTHR43445">
    <property type="entry name" value="UDP-N-ACETYLMURAMATE--L-ALANINE LIGASE-RELATED"/>
    <property type="match status" value="1"/>
</dbReference>
<dbReference type="Pfam" id="PF01225">
    <property type="entry name" value="Mur_ligase"/>
    <property type="match status" value="1"/>
</dbReference>
<dbReference type="Pfam" id="PF02875">
    <property type="entry name" value="Mur_ligase_C"/>
    <property type="match status" value="1"/>
</dbReference>
<dbReference type="Pfam" id="PF08245">
    <property type="entry name" value="Mur_ligase_M"/>
    <property type="match status" value="1"/>
</dbReference>
<dbReference type="SUPFAM" id="SSF51984">
    <property type="entry name" value="MurCD N-terminal domain"/>
    <property type="match status" value="1"/>
</dbReference>
<dbReference type="SUPFAM" id="SSF53623">
    <property type="entry name" value="MurD-like peptide ligases, catalytic domain"/>
    <property type="match status" value="1"/>
</dbReference>
<dbReference type="SUPFAM" id="SSF53244">
    <property type="entry name" value="MurD-like peptide ligases, peptide-binding domain"/>
    <property type="match status" value="1"/>
</dbReference>